<sequence>MLSANMLRRMHHGVAVTRMLLVSNGKVQVKKSALYPVMAKLARTYATKNYPAHTVINMPALSPTMTTGNIGAFQKKIGDKIEPGDVLCEIETDKAQIDFEQQDEGYLAKILIETGTKDVPVGKPLAVTVENEGDVAAMADFTIEDSSAKEPSAKSGEEKSAPSSEKQSKETSSPSNVSGEERGDRVFASPLARKLAEEKDLDLSQIRGSGPNGRIIKVDIENFKPVVAPKPSNEAAAKATTPAASAADAAAPGDYEDLPLSNMRKIIASRLAESKNMNPHYYVTVSVNMEKIIRLRAALNAMADGRYKLSVNDLVIKATTAALRQVPEVNAAWMGDFIRQYKNVDISMAVATPSGLITPVIRNTHALGLAEISTLAKDYGQRARNNKLKPEEYQGGTFTISNLGMFPVDQFTAIINPPQACILAVGTTVDTVVPDSTSEKGFKVAPIMKCTLSSDHRVVDGAMAARFTTALKKILENPLEIML</sequence>
<accession>O59816</accession>
<reference key="1">
    <citation type="journal article" date="2002" name="Nature">
        <title>The genome sequence of Schizosaccharomyces pombe.</title>
        <authorList>
            <person name="Wood V."/>
            <person name="Gwilliam R."/>
            <person name="Rajandream M.A."/>
            <person name="Lyne M.H."/>
            <person name="Lyne R."/>
            <person name="Stewart A."/>
            <person name="Sgouros J.G."/>
            <person name="Peat N."/>
            <person name="Hayles J."/>
            <person name="Baker S.G."/>
            <person name="Basham D."/>
            <person name="Bowman S."/>
            <person name="Brooks K."/>
            <person name="Brown D."/>
            <person name="Brown S."/>
            <person name="Chillingworth T."/>
            <person name="Churcher C.M."/>
            <person name="Collins M."/>
            <person name="Connor R."/>
            <person name="Cronin A."/>
            <person name="Davis P."/>
            <person name="Feltwell T."/>
            <person name="Fraser A."/>
            <person name="Gentles S."/>
            <person name="Goble A."/>
            <person name="Hamlin N."/>
            <person name="Harris D.E."/>
            <person name="Hidalgo J."/>
            <person name="Hodgson G."/>
            <person name="Holroyd S."/>
            <person name="Hornsby T."/>
            <person name="Howarth S."/>
            <person name="Huckle E.J."/>
            <person name="Hunt S."/>
            <person name="Jagels K."/>
            <person name="James K.D."/>
            <person name="Jones L."/>
            <person name="Jones M."/>
            <person name="Leather S."/>
            <person name="McDonald S."/>
            <person name="McLean J."/>
            <person name="Mooney P."/>
            <person name="Moule S."/>
            <person name="Mungall K.L."/>
            <person name="Murphy L.D."/>
            <person name="Niblett D."/>
            <person name="Odell C."/>
            <person name="Oliver K."/>
            <person name="O'Neil S."/>
            <person name="Pearson D."/>
            <person name="Quail M.A."/>
            <person name="Rabbinowitsch E."/>
            <person name="Rutherford K.M."/>
            <person name="Rutter S."/>
            <person name="Saunders D."/>
            <person name="Seeger K."/>
            <person name="Sharp S."/>
            <person name="Skelton J."/>
            <person name="Simmonds M.N."/>
            <person name="Squares R."/>
            <person name="Squares S."/>
            <person name="Stevens K."/>
            <person name="Taylor K."/>
            <person name="Taylor R.G."/>
            <person name="Tivey A."/>
            <person name="Walsh S.V."/>
            <person name="Warren T."/>
            <person name="Whitehead S."/>
            <person name="Woodward J.R."/>
            <person name="Volckaert G."/>
            <person name="Aert R."/>
            <person name="Robben J."/>
            <person name="Grymonprez B."/>
            <person name="Weltjens I."/>
            <person name="Vanstreels E."/>
            <person name="Rieger M."/>
            <person name="Schaefer M."/>
            <person name="Mueller-Auer S."/>
            <person name="Gabel C."/>
            <person name="Fuchs M."/>
            <person name="Duesterhoeft A."/>
            <person name="Fritzc C."/>
            <person name="Holzer E."/>
            <person name="Moestl D."/>
            <person name="Hilbert H."/>
            <person name="Borzym K."/>
            <person name="Langer I."/>
            <person name="Beck A."/>
            <person name="Lehrach H."/>
            <person name="Reinhardt R."/>
            <person name="Pohl T.M."/>
            <person name="Eger P."/>
            <person name="Zimmermann W."/>
            <person name="Wedler H."/>
            <person name="Wambutt R."/>
            <person name="Purnelle B."/>
            <person name="Goffeau A."/>
            <person name="Cadieu E."/>
            <person name="Dreano S."/>
            <person name="Gloux S."/>
            <person name="Lelaure V."/>
            <person name="Mottier S."/>
            <person name="Galibert F."/>
            <person name="Aves S.J."/>
            <person name="Xiang Z."/>
            <person name="Hunt C."/>
            <person name="Moore K."/>
            <person name="Hurst S.M."/>
            <person name="Lucas M."/>
            <person name="Rochet M."/>
            <person name="Gaillardin C."/>
            <person name="Tallada V.A."/>
            <person name="Garzon A."/>
            <person name="Thode G."/>
            <person name="Daga R.R."/>
            <person name="Cruzado L."/>
            <person name="Jimenez J."/>
            <person name="Sanchez M."/>
            <person name="del Rey F."/>
            <person name="Benito J."/>
            <person name="Dominguez A."/>
            <person name="Revuelta J.L."/>
            <person name="Moreno S."/>
            <person name="Armstrong J."/>
            <person name="Forsburg S.L."/>
            <person name="Cerutti L."/>
            <person name="Lowe T."/>
            <person name="McCombie W.R."/>
            <person name="Paulsen I."/>
            <person name="Potashkin J."/>
            <person name="Shpakovski G.V."/>
            <person name="Ussery D."/>
            <person name="Barrell B.G."/>
            <person name="Nurse P."/>
        </authorList>
    </citation>
    <scope>NUCLEOTIDE SEQUENCE [LARGE SCALE GENOMIC DNA]</scope>
    <source>
        <strain>972 / ATCC 24843</strain>
    </source>
</reference>
<gene>
    <name evidence="7" type="primary">lat1</name>
    <name evidence="7" type="ORF">SPCC794.07</name>
</gene>
<name>ODP2_SCHPO</name>
<organism>
    <name type="scientific">Schizosaccharomyces pombe (strain 972 / ATCC 24843)</name>
    <name type="common">Fission yeast</name>
    <dbReference type="NCBI Taxonomy" id="284812"/>
    <lineage>
        <taxon>Eukaryota</taxon>
        <taxon>Fungi</taxon>
        <taxon>Dikarya</taxon>
        <taxon>Ascomycota</taxon>
        <taxon>Taphrinomycotina</taxon>
        <taxon>Schizosaccharomycetes</taxon>
        <taxon>Schizosaccharomycetales</taxon>
        <taxon>Schizosaccharomycetaceae</taxon>
        <taxon>Schizosaccharomyces</taxon>
    </lineage>
</organism>
<evidence type="ECO:0000250" key="1">
    <source>
        <dbReference type="UniProtKB" id="P12695"/>
    </source>
</evidence>
<evidence type="ECO:0000255" key="2"/>
<evidence type="ECO:0000255" key="3">
    <source>
        <dbReference type="PROSITE-ProRule" id="PRU01066"/>
    </source>
</evidence>
<evidence type="ECO:0000255" key="4">
    <source>
        <dbReference type="PROSITE-ProRule" id="PRU01170"/>
    </source>
</evidence>
<evidence type="ECO:0000256" key="5">
    <source>
        <dbReference type="SAM" id="MobiDB-lite"/>
    </source>
</evidence>
<evidence type="ECO:0000305" key="6"/>
<evidence type="ECO:0000312" key="7">
    <source>
        <dbReference type="PomBase" id="SPCC794.07"/>
    </source>
</evidence>
<keyword id="KW-0012">Acyltransferase</keyword>
<keyword id="KW-0450">Lipoyl</keyword>
<keyword id="KW-0496">Mitochondrion</keyword>
<keyword id="KW-1185">Reference proteome</keyword>
<keyword id="KW-0808">Transferase</keyword>
<keyword id="KW-0809">Transit peptide</keyword>
<proteinExistence type="inferred from homology"/>
<protein>
    <recommendedName>
        <fullName>Dihydrolipoyllysine-residue acetyltransferase component of pyruvate dehydrogenase complex, mitochondrial</fullName>
        <ecNumber>2.3.1.12</ecNumber>
    </recommendedName>
    <alternativeName>
        <fullName>Dihydrolipoamide acetyltransferase component of pyruvate dehydrogenase complex</fullName>
    </alternativeName>
    <alternativeName>
        <fullName>Pyruvate dehydrogenase complex component E2</fullName>
        <shortName>PDC-E2</shortName>
        <shortName>PDCE2</shortName>
    </alternativeName>
</protein>
<dbReference type="EC" id="2.3.1.12"/>
<dbReference type="EMBL" id="CU329672">
    <property type="protein sequence ID" value="CAA19134.1"/>
    <property type="molecule type" value="Genomic_DNA"/>
</dbReference>
<dbReference type="PIR" id="T41615">
    <property type="entry name" value="T41615"/>
</dbReference>
<dbReference type="RefSeq" id="NP_587755.1">
    <property type="nucleotide sequence ID" value="NM_001022748.2"/>
</dbReference>
<dbReference type="SMR" id="O59816"/>
<dbReference type="BioGRID" id="275378">
    <property type="interactions" value="8"/>
</dbReference>
<dbReference type="FunCoup" id="O59816">
    <property type="interactions" value="430"/>
</dbReference>
<dbReference type="STRING" id="284812.O59816"/>
<dbReference type="iPTMnet" id="O59816"/>
<dbReference type="PaxDb" id="4896-SPCC794.07.1"/>
<dbReference type="EnsemblFungi" id="SPCC794.07.1">
    <property type="protein sequence ID" value="SPCC794.07.1:pep"/>
    <property type="gene ID" value="SPCC794.07"/>
</dbReference>
<dbReference type="GeneID" id="2538797"/>
<dbReference type="KEGG" id="spo:2538797"/>
<dbReference type="PomBase" id="SPCC794.07">
    <property type="gene designation" value="lat1"/>
</dbReference>
<dbReference type="VEuPathDB" id="FungiDB:SPCC794.07"/>
<dbReference type="eggNOG" id="KOG0557">
    <property type="taxonomic scope" value="Eukaryota"/>
</dbReference>
<dbReference type="HOGENOM" id="CLU_016733_10_2_1"/>
<dbReference type="InParanoid" id="O59816"/>
<dbReference type="OMA" id="TMEFESF"/>
<dbReference type="PhylomeDB" id="O59816"/>
<dbReference type="Reactome" id="R-SPO-204174">
    <property type="pathway name" value="Regulation of pyruvate dehydrogenase (PDH) complex"/>
</dbReference>
<dbReference type="Reactome" id="R-SPO-5362517">
    <property type="pathway name" value="Signaling by Retinoic Acid"/>
</dbReference>
<dbReference type="Reactome" id="R-SPO-9857492">
    <property type="pathway name" value="Protein lipoylation"/>
</dbReference>
<dbReference type="Reactome" id="R-SPO-9861559">
    <property type="pathway name" value="PDH complex synthesizes acetyl-CoA from PYR"/>
</dbReference>
<dbReference type="PRO" id="PR:O59816"/>
<dbReference type="Proteomes" id="UP000002485">
    <property type="component" value="Chromosome III"/>
</dbReference>
<dbReference type="GO" id="GO:0005759">
    <property type="term" value="C:mitochondrial matrix"/>
    <property type="evidence" value="ECO:0007669"/>
    <property type="project" value="UniProtKB-SubCell"/>
</dbReference>
<dbReference type="GO" id="GO:0005739">
    <property type="term" value="C:mitochondrion"/>
    <property type="evidence" value="ECO:0007005"/>
    <property type="project" value="PomBase"/>
</dbReference>
<dbReference type="GO" id="GO:0045254">
    <property type="term" value="C:pyruvate dehydrogenase complex"/>
    <property type="evidence" value="ECO:0000318"/>
    <property type="project" value="GO_Central"/>
</dbReference>
<dbReference type="GO" id="GO:0004742">
    <property type="term" value="F:dihydrolipoyllysine-residue acetyltransferase activity"/>
    <property type="evidence" value="ECO:0000266"/>
    <property type="project" value="PomBase"/>
</dbReference>
<dbReference type="GO" id="GO:0009060">
    <property type="term" value="P:aerobic respiration"/>
    <property type="evidence" value="ECO:0000305"/>
    <property type="project" value="PomBase"/>
</dbReference>
<dbReference type="GO" id="GO:0006086">
    <property type="term" value="P:pyruvate decarboxylation to acetyl-CoA"/>
    <property type="evidence" value="ECO:0000318"/>
    <property type="project" value="GO_Central"/>
</dbReference>
<dbReference type="CDD" id="cd06849">
    <property type="entry name" value="lipoyl_domain"/>
    <property type="match status" value="1"/>
</dbReference>
<dbReference type="FunFam" id="2.40.50.100:FF:000010">
    <property type="entry name" value="Acetyltransferase component of pyruvate dehydrogenase complex"/>
    <property type="match status" value="1"/>
</dbReference>
<dbReference type="FunFam" id="3.30.559.10:FF:000003">
    <property type="entry name" value="Acetyltransferase component of pyruvate dehydrogenase complex"/>
    <property type="match status" value="1"/>
</dbReference>
<dbReference type="Gene3D" id="2.40.50.100">
    <property type="match status" value="1"/>
</dbReference>
<dbReference type="Gene3D" id="3.30.559.10">
    <property type="entry name" value="Chloramphenicol acetyltransferase-like domain"/>
    <property type="match status" value="1"/>
</dbReference>
<dbReference type="Gene3D" id="4.10.320.10">
    <property type="entry name" value="E3-binding domain"/>
    <property type="match status" value="1"/>
</dbReference>
<dbReference type="InterPro" id="IPR003016">
    <property type="entry name" value="2-oxoA_DH_lipoyl-BS"/>
</dbReference>
<dbReference type="InterPro" id="IPR001078">
    <property type="entry name" value="2-oxoacid_DH_actylTfrase"/>
</dbReference>
<dbReference type="InterPro" id="IPR000089">
    <property type="entry name" value="Biotin_lipoyl"/>
</dbReference>
<dbReference type="InterPro" id="IPR023213">
    <property type="entry name" value="CAT-like_dom_sf"/>
</dbReference>
<dbReference type="InterPro" id="IPR045257">
    <property type="entry name" value="E2/Pdx1"/>
</dbReference>
<dbReference type="InterPro" id="IPR036625">
    <property type="entry name" value="E3-bd_dom_sf"/>
</dbReference>
<dbReference type="InterPro" id="IPR006257">
    <property type="entry name" value="LAT1"/>
</dbReference>
<dbReference type="InterPro" id="IPR004167">
    <property type="entry name" value="PSBD"/>
</dbReference>
<dbReference type="InterPro" id="IPR011053">
    <property type="entry name" value="Single_hybrid_motif"/>
</dbReference>
<dbReference type="NCBIfam" id="TIGR01349">
    <property type="entry name" value="PDHac_trf_mito"/>
    <property type="match status" value="1"/>
</dbReference>
<dbReference type="PANTHER" id="PTHR23151">
    <property type="entry name" value="DIHYDROLIPOAMIDE ACETYL/SUCCINYL-TRANSFERASE-RELATED"/>
    <property type="match status" value="1"/>
</dbReference>
<dbReference type="PANTHER" id="PTHR23151:SF90">
    <property type="entry name" value="DIHYDROLIPOYLLYSINE-RESIDUE ACETYLTRANSFERASE COMPONENT OF PYRUVATE DEHYDROGENASE COMPLEX, MITOCHONDRIAL-RELATED"/>
    <property type="match status" value="1"/>
</dbReference>
<dbReference type="Pfam" id="PF00198">
    <property type="entry name" value="2-oxoacid_dh"/>
    <property type="match status" value="1"/>
</dbReference>
<dbReference type="Pfam" id="PF00364">
    <property type="entry name" value="Biotin_lipoyl"/>
    <property type="match status" value="1"/>
</dbReference>
<dbReference type="Pfam" id="PF02817">
    <property type="entry name" value="E3_binding"/>
    <property type="match status" value="1"/>
</dbReference>
<dbReference type="SUPFAM" id="SSF52777">
    <property type="entry name" value="CoA-dependent acyltransferases"/>
    <property type="match status" value="1"/>
</dbReference>
<dbReference type="SUPFAM" id="SSF47005">
    <property type="entry name" value="Peripheral subunit-binding domain of 2-oxo acid dehydrogenase complex"/>
    <property type="match status" value="1"/>
</dbReference>
<dbReference type="SUPFAM" id="SSF51230">
    <property type="entry name" value="Single hybrid motif"/>
    <property type="match status" value="1"/>
</dbReference>
<dbReference type="PROSITE" id="PS50968">
    <property type="entry name" value="BIOTINYL_LIPOYL"/>
    <property type="match status" value="1"/>
</dbReference>
<dbReference type="PROSITE" id="PS00189">
    <property type="entry name" value="LIPOYL"/>
    <property type="match status" value="1"/>
</dbReference>
<dbReference type="PROSITE" id="PS51826">
    <property type="entry name" value="PSBD"/>
    <property type="match status" value="1"/>
</dbReference>
<comment type="function">
    <text evidence="1">The pyruvate dehydrogenase complex catalyzes the overall conversion of pyruvate to acetyl-CoA and CO(2). It contains multiple copies of three enzymatic components: pyruvate dehydrogenase (E1), dihydrolipoamide acetyltransferase (E2) and lipoamide dehydrogenase (E3).</text>
</comment>
<comment type="catalytic activity">
    <reaction evidence="1">
        <text>N(6)-[(R)-dihydrolipoyl]-L-lysyl-[protein] + acetyl-CoA = N(6)-[(R)-S(8)-acetyldihydrolipoyl]-L-lysyl-[protein] + CoA</text>
        <dbReference type="Rhea" id="RHEA:17017"/>
        <dbReference type="Rhea" id="RHEA-COMP:10475"/>
        <dbReference type="Rhea" id="RHEA-COMP:10478"/>
        <dbReference type="ChEBI" id="CHEBI:57287"/>
        <dbReference type="ChEBI" id="CHEBI:57288"/>
        <dbReference type="ChEBI" id="CHEBI:83100"/>
        <dbReference type="ChEBI" id="CHEBI:83111"/>
        <dbReference type="EC" id="2.3.1.12"/>
    </reaction>
</comment>
<comment type="cofactor">
    <cofactor evidence="1">
        <name>(R)-lipoate</name>
        <dbReference type="ChEBI" id="CHEBI:83088"/>
    </cofactor>
    <text evidence="1">Binds 1 lipoyl cofactor covalently.</text>
</comment>
<comment type="subcellular location">
    <subcellularLocation>
        <location evidence="1">Mitochondrion matrix</location>
    </subcellularLocation>
</comment>
<comment type="miscellaneous">
    <text evidence="6">The E2 component contains covalently-bound lipoyl cofactors and it participates in the generation of acetyl groups from hydroxyethyl-thiamine pyrophosphate-E1 and their transfer to coenzyme A.</text>
</comment>
<comment type="similarity">
    <text evidence="6">Belongs to the 2-oxoacid dehydrogenase family.</text>
</comment>
<feature type="transit peptide" description="Mitochondrion" evidence="1">
    <location>
        <begin position="1"/>
        <end position="28"/>
    </location>
</feature>
<feature type="chain" id="PRO_0000020482" description="Dihydrolipoyllysine-residue acetyltransferase component of pyruvate dehydrogenase complex, mitochondrial">
    <location>
        <begin position="29"/>
        <end position="483"/>
    </location>
</feature>
<feature type="domain" description="Lipoyl-binding" evidence="3">
    <location>
        <begin position="53"/>
        <end position="129"/>
    </location>
</feature>
<feature type="domain" description="Peripheral subunit-binding (PSBD)" evidence="4">
    <location>
        <begin position="187"/>
        <end position="224"/>
    </location>
</feature>
<feature type="region of interest" description="Disordered" evidence="5">
    <location>
        <begin position="143"/>
        <end position="187"/>
    </location>
</feature>
<feature type="region of interest" description="Disordered" evidence="5">
    <location>
        <begin position="234"/>
        <end position="254"/>
    </location>
</feature>
<feature type="compositionally biased region" description="Basic and acidic residues" evidence="5">
    <location>
        <begin position="146"/>
        <end position="160"/>
    </location>
</feature>
<feature type="compositionally biased region" description="Polar residues" evidence="5">
    <location>
        <begin position="161"/>
        <end position="178"/>
    </location>
</feature>
<feature type="compositionally biased region" description="Low complexity" evidence="5">
    <location>
        <begin position="235"/>
        <end position="252"/>
    </location>
</feature>
<feature type="active site" evidence="2">
    <location>
        <position position="456"/>
    </location>
</feature>
<feature type="active site" evidence="2">
    <location>
        <position position="460"/>
    </location>
</feature>
<feature type="modified residue" description="N6-lipoyllysine" evidence="1 3">
    <location>
        <position position="94"/>
    </location>
</feature>